<organism>
    <name type="scientific">Saccharolobus islandicus (strain Y.N.15.51 / Yellowstone #2)</name>
    <name type="common">Sulfolobus islandicus</name>
    <dbReference type="NCBI Taxonomy" id="419942"/>
    <lineage>
        <taxon>Archaea</taxon>
        <taxon>Thermoproteota</taxon>
        <taxon>Thermoprotei</taxon>
        <taxon>Sulfolobales</taxon>
        <taxon>Sulfolobaceae</taxon>
        <taxon>Saccharolobus</taxon>
    </lineage>
</organism>
<dbReference type="EMBL" id="CP001404">
    <property type="protein sequence ID" value="ACP48084.1"/>
    <property type="molecule type" value="Genomic_DNA"/>
</dbReference>
<dbReference type="RefSeq" id="WP_012717291.1">
    <property type="nucleotide sequence ID" value="NC_012623.1"/>
</dbReference>
<dbReference type="SMR" id="C3NFW6"/>
<dbReference type="GeneID" id="7811258"/>
<dbReference type="KEGG" id="sin:YN1551_0976"/>
<dbReference type="HOGENOM" id="CLU_000688_2_0_2"/>
<dbReference type="Proteomes" id="UP000006818">
    <property type="component" value="Chromosome"/>
</dbReference>
<dbReference type="GO" id="GO:0005737">
    <property type="term" value="C:cytoplasm"/>
    <property type="evidence" value="ECO:0007669"/>
    <property type="project" value="UniProtKB-SubCell"/>
</dbReference>
<dbReference type="GO" id="GO:0022623">
    <property type="term" value="C:proteasome-activating nucleotidase complex"/>
    <property type="evidence" value="ECO:0007669"/>
    <property type="project" value="UniProtKB-UniRule"/>
</dbReference>
<dbReference type="GO" id="GO:0005524">
    <property type="term" value="F:ATP binding"/>
    <property type="evidence" value="ECO:0007669"/>
    <property type="project" value="UniProtKB-UniRule"/>
</dbReference>
<dbReference type="GO" id="GO:0016887">
    <property type="term" value="F:ATP hydrolysis activity"/>
    <property type="evidence" value="ECO:0007669"/>
    <property type="project" value="UniProtKB-UniRule"/>
</dbReference>
<dbReference type="GO" id="GO:0010498">
    <property type="term" value="P:proteasomal protein catabolic process"/>
    <property type="evidence" value="ECO:0007669"/>
    <property type="project" value="UniProtKB-UniRule"/>
</dbReference>
<dbReference type="GO" id="GO:0043335">
    <property type="term" value="P:protein unfolding"/>
    <property type="evidence" value="ECO:0007669"/>
    <property type="project" value="UniProtKB-UniRule"/>
</dbReference>
<dbReference type="CDD" id="cd19502">
    <property type="entry name" value="RecA-like_PAN_like"/>
    <property type="match status" value="1"/>
</dbReference>
<dbReference type="FunFam" id="3.40.50.300:FF:000033">
    <property type="entry name" value="26S protease regulatory subunit 6B"/>
    <property type="match status" value="1"/>
</dbReference>
<dbReference type="FunFam" id="1.10.8.60:FF:000001">
    <property type="entry name" value="ATP-dependent zinc metalloprotease FtsH"/>
    <property type="match status" value="1"/>
</dbReference>
<dbReference type="Gene3D" id="1.10.8.60">
    <property type="match status" value="1"/>
</dbReference>
<dbReference type="Gene3D" id="2.40.50.140">
    <property type="entry name" value="Nucleic acid-binding proteins"/>
    <property type="match status" value="1"/>
</dbReference>
<dbReference type="Gene3D" id="3.40.50.300">
    <property type="entry name" value="P-loop containing nucleotide triphosphate hydrolases"/>
    <property type="match status" value="1"/>
</dbReference>
<dbReference type="HAMAP" id="MF_00553">
    <property type="entry name" value="PAN"/>
    <property type="match status" value="1"/>
</dbReference>
<dbReference type="InterPro" id="IPR050221">
    <property type="entry name" value="26S_Proteasome_ATPase"/>
</dbReference>
<dbReference type="InterPro" id="IPR003593">
    <property type="entry name" value="AAA+_ATPase"/>
</dbReference>
<dbReference type="InterPro" id="IPR041569">
    <property type="entry name" value="AAA_lid_3"/>
</dbReference>
<dbReference type="InterPro" id="IPR003959">
    <property type="entry name" value="ATPase_AAA_core"/>
</dbReference>
<dbReference type="InterPro" id="IPR003960">
    <property type="entry name" value="ATPase_AAA_CS"/>
</dbReference>
<dbReference type="InterPro" id="IPR012340">
    <property type="entry name" value="NA-bd_OB-fold"/>
</dbReference>
<dbReference type="InterPro" id="IPR023501">
    <property type="entry name" value="Nucleotidase_PAN"/>
</dbReference>
<dbReference type="InterPro" id="IPR027417">
    <property type="entry name" value="P-loop_NTPase"/>
</dbReference>
<dbReference type="InterPro" id="IPR032501">
    <property type="entry name" value="Prot_ATP_ID_OB_2nd"/>
</dbReference>
<dbReference type="NCBIfam" id="NF003069">
    <property type="entry name" value="PRK03992.1"/>
    <property type="match status" value="1"/>
</dbReference>
<dbReference type="NCBIfam" id="TIGR01242">
    <property type="entry name" value="proteasome-activating nucleotidase"/>
    <property type="match status" value="1"/>
</dbReference>
<dbReference type="PANTHER" id="PTHR23073">
    <property type="entry name" value="26S PROTEASOME REGULATORY SUBUNIT"/>
    <property type="match status" value="1"/>
</dbReference>
<dbReference type="Pfam" id="PF00004">
    <property type="entry name" value="AAA"/>
    <property type="match status" value="1"/>
</dbReference>
<dbReference type="Pfam" id="PF17862">
    <property type="entry name" value="AAA_lid_3"/>
    <property type="match status" value="1"/>
</dbReference>
<dbReference type="Pfam" id="PF16450">
    <property type="entry name" value="Prot_ATP_ID_OB_C"/>
    <property type="match status" value="1"/>
</dbReference>
<dbReference type="SMART" id="SM00382">
    <property type="entry name" value="AAA"/>
    <property type="match status" value="1"/>
</dbReference>
<dbReference type="SUPFAM" id="SSF52540">
    <property type="entry name" value="P-loop containing nucleoside triphosphate hydrolases"/>
    <property type="match status" value="1"/>
</dbReference>
<dbReference type="PROSITE" id="PS00674">
    <property type="entry name" value="AAA"/>
    <property type="match status" value="1"/>
</dbReference>
<proteinExistence type="inferred from homology"/>
<reference key="1">
    <citation type="journal article" date="2009" name="Proc. Natl. Acad. Sci. U.S.A.">
        <title>Biogeography of the Sulfolobus islandicus pan-genome.</title>
        <authorList>
            <person name="Reno M.L."/>
            <person name="Held N.L."/>
            <person name="Fields C.J."/>
            <person name="Burke P.V."/>
            <person name="Whitaker R.J."/>
        </authorList>
    </citation>
    <scope>NUCLEOTIDE SEQUENCE [LARGE SCALE GENOMIC DNA]</scope>
    <source>
        <strain>Y.N.15.51 / Yellowstone #2</strain>
    </source>
</reference>
<gene>
    <name evidence="1" type="primary">pan</name>
    <name type="ordered locus">YN1551_0976</name>
</gene>
<evidence type="ECO:0000255" key="1">
    <source>
        <dbReference type="HAMAP-Rule" id="MF_00553"/>
    </source>
</evidence>
<feature type="chain" id="PRO_1000212008" description="Proteasome-activating nucleotidase">
    <location>
        <begin position="1"/>
        <end position="393"/>
    </location>
</feature>
<feature type="region of interest" description="Docks into pockets in the proteasome alpha-ring to cause gate opening" evidence="1">
    <location>
        <begin position="391"/>
        <end position="393"/>
    </location>
</feature>
<feature type="coiled-coil region" evidence="1">
    <location>
        <begin position="14"/>
        <end position="53"/>
    </location>
</feature>
<feature type="binding site" evidence="1">
    <location>
        <begin position="178"/>
        <end position="183"/>
    </location>
    <ligand>
        <name>ATP</name>
        <dbReference type="ChEBI" id="CHEBI:30616"/>
    </ligand>
</feature>
<feature type="binding site" evidence="1">
    <location>
        <position position="317"/>
    </location>
    <ligand>
        <name>ATP</name>
        <dbReference type="ChEBI" id="CHEBI:30616"/>
    </ligand>
</feature>
<accession>C3NFW6</accession>
<name>PAN_SACI1</name>
<sequence>MSGDFDTIRDASSSDEVQLVRLLEEKIKSLQIEIENLRKELNYYKAEMEKMLSPPLIEAVVLDVLPDGRVLVRSSSGPNLVVNVASHIDQKLIKPGVSVALNQRGSTILEVLPQKEDPIVKTMEIVEKPNVTYSEIGGLEEQIKELREVVELPLKKPEIFREIGVEPPKGVLLYGPPGTGKTMLAKAVATESNAVFIHVVASEFAQKFVGEGARIVRELFEMAKRKAPSIIFIDEIDAIGAKRIDIGTSGEREIQRTLMQLLAELDGFNPLDNVKIIAATNRIDILDPALLRPGRFDRIIEVPLPDFRGRTEIFNIYLKKMKVEDNINLELLSQLSEGFSGADIKNVCVEAAYMAIRDGRNKVTMKDLVNAITKINVKRNNMESMKERREKYS</sequence>
<keyword id="KW-0067">ATP-binding</keyword>
<keyword id="KW-0143">Chaperone</keyword>
<keyword id="KW-0175">Coiled coil</keyword>
<keyword id="KW-0963">Cytoplasm</keyword>
<keyword id="KW-0547">Nucleotide-binding</keyword>
<keyword id="KW-0647">Proteasome</keyword>
<comment type="function">
    <text evidence="1">ATPase which is responsible for recognizing, binding, unfolding and translocation of substrate proteins into the archaeal 20S proteasome core particle. Is essential for opening the gate of the 20S proteasome via an interaction with its C-terminus, thereby allowing substrate entry and access to the site of proteolysis. Thus, the C-termini of the proteasomal ATPase function like a 'key in a lock' to induce gate opening and therefore regulate proteolysis. Unfolding activity requires energy from ATP hydrolysis, whereas ATP binding alone promotes ATPase-20S proteasome association which triggers gate opening, and supports translocation of unfolded substrates.</text>
</comment>
<comment type="subunit">
    <text evidence="1">Homohexamer. The hexameric complex has a two-ring architecture resembling a top hat that caps the 20S proteasome core at one or both ends. Upon ATP-binding, the C-terminus of PAN interacts with the alpha-rings of the proteasome core by binding to the intersubunit pockets.</text>
</comment>
<comment type="subcellular location">
    <subcellularLocation>
        <location evidence="1">Cytoplasm</location>
    </subcellularLocation>
</comment>
<comment type="domain">
    <text evidence="1">Consists of three main regions, an N-terminal coiled-coil domain that may assist in substrate recognition, an interdomain involved in PAN hexamerization, and a C-terminal ATPase domain of the AAA type.</text>
</comment>
<comment type="similarity">
    <text evidence="1">Belongs to the AAA ATPase family.</text>
</comment>
<protein>
    <recommendedName>
        <fullName evidence="1">Proteasome-activating nucleotidase</fullName>
        <shortName evidence="1">PAN</shortName>
    </recommendedName>
    <alternativeName>
        <fullName evidence="1">Proteasomal ATPase</fullName>
    </alternativeName>
    <alternativeName>
        <fullName evidence="1">Proteasome regulatory ATPase</fullName>
    </alternativeName>
    <alternativeName>
        <fullName evidence="1">Proteasome regulatory particle</fullName>
    </alternativeName>
</protein>